<feature type="chain" id="PRO_1000014318" description="Small ribosomal subunit protein uS7">
    <location>
        <begin position="1"/>
        <end position="156"/>
    </location>
</feature>
<proteinExistence type="inferred from homology"/>
<name>RS7_VIBC1</name>
<dbReference type="EMBL" id="CP000789">
    <property type="protein sequence ID" value="ABU69116.1"/>
    <property type="molecule type" value="Genomic_DNA"/>
</dbReference>
<dbReference type="RefSeq" id="WP_005438390.1">
    <property type="nucleotide sequence ID" value="NC_022269.1"/>
</dbReference>
<dbReference type="SMR" id="A7MZ63"/>
<dbReference type="GeneID" id="83583681"/>
<dbReference type="KEGG" id="vha:VIBHAR_00056"/>
<dbReference type="PATRIC" id="fig|338187.25.peg.2467"/>
<dbReference type="Proteomes" id="UP000008152">
    <property type="component" value="Chromosome I"/>
</dbReference>
<dbReference type="GO" id="GO:0015935">
    <property type="term" value="C:small ribosomal subunit"/>
    <property type="evidence" value="ECO:0007669"/>
    <property type="project" value="InterPro"/>
</dbReference>
<dbReference type="GO" id="GO:0019843">
    <property type="term" value="F:rRNA binding"/>
    <property type="evidence" value="ECO:0007669"/>
    <property type="project" value="UniProtKB-UniRule"/>
</dbReference>
<dbReference type="GO" id="GO:0003735">
    <property type="term" value="F:structural constituent of ribosome"/>
    <property type="evidence" value="ECO:0007669"/>
    <property type="project" value="InterPro"/>
</dbReference>
<dbReference type="GO" id="GO:0000049">
    <property type="term" value="F:tRNA binding"/>
    <property type="evidence" value="ECO:0007669"/>
    <property type="project" value="UniProtKB-UniRule"/>
</dbReference>
<dbReference type="GO" id="GO:0006412">
    <property type="term" value="P:translation"/>
    <property type="evidence" value="ECO:0007669"/>
    <property type="project" value="UniProtKB-UniRule"/>
</dbReference>
<dbReference type="CDD" id="cd14869">
    <property type="entry name" value="uS7_Bacteria"/>
    <property type="match status" value="1"/>
</dbReference>
<dbReference type="FunFam" id="1.10.455.10:FF:000001">
    <property type="entry name" value="30S ribosomal protein S7"/>
    <property type="match status" value="1"/>
</dbReference>
<dbReference type="Gene3D" id="1.10.455.10">
    <property type="entry name" value="Ribosomal protein S7 domain"/>
    <property type="match status" value="1"/>
</dbReference>
<dbReference type="HAMAP" id="MF_00480_B">
    <property type="entry name" value="Ribosomal_uS7_B"/>
    <property type="match status" value="1"/>
</dbReference>
<dbReference type="InterPro" id="IPR000235">
    <property type="entry name" value="Ribosomal_uS7"/>
</dbReference>
<dbReference type="InterPro" id="IPR005717">
    <property type="entry name" value="Ribosomal_uS7_bac/org-type"/>
</dbReference>
<dbReference type="InterPro" id="IPR020606">
    <property type="entry name" value="Ribosomal_uS7_CS"/>
</dbReference>
<dbReference type="InterPro" id="IPR023798">
    <property type="entry name" value="Ribosomal_uS7_dom"/>
</dbReference>
<dbReference type="InterPro" id="IPR036823">
    <property type="entry name" value="Ribosomal_uS7_dom_sf"/>
</dbReference>
<dbReference type="NCBIfam" id="TIGR01029">
    <property type="entry name" value="rpsG_bact"/>
    <property type="match status" value="1"/>
</dbReference>
<dbReference type="PANTHER" id="PTHR11205">
    <property type="entry name" value="RIBOSOMAL PROTEIN S7"/>
    <property type="match status" value="1"/>
</dbReference>
<dbReference type="Pfam" id="PF00177">
    <property type="entry name" value="Ribosomal_S7"/>
    <property type="match status" value="1"/>
</dbReference>
<dbReference type="PIRSF" id="PIRSF002122">
    <property type="entry name" value="RPS7p_RPS7a_RPS5e_RPS7o"/>
    <property type="match status" value="1"/>
</dbReference>
<dbReference type="SUPFAM" id="SSF47973">
    <property type="entry name" value="Ribosomal protein S7"/>
    <property type="match status" value="1"/>
</dbReference>
<dbReference type="PROSITE" id="PS00052">
    <property type="entry name" value="RIBOSOMAL_S7"/>
    <property type="match status" value="1"/>
</dbReference>
<reference key="1">
    <citation type="submission" date="2007-08" db="EMBL/GenBank/DDBJ databases">
        <authorList>
            <consortium name="The Vibrio harveyi Genome Sequencing Project"/>
            <person name="Bassler B."/>
            <person name="Clifton S.W."/>
            <person name="Fulton L."/>
            <person name="Delehaunty K."/>
            <person name="Fronick C."/>
            <person name="Harrison M."/>
            <person name="Markivic C."/>
            <person name="Fulton R."/>
            <person name="Tin-Wollam A.-M."/>
            <person name="Shah N."/>
            <person name="Pepin K."/>
            <person name="Nash W."/>
            <person name="Thiruvilangam P."/>
            <person name="Bhonagiri V."/>
            <person name="Waters C."/>
            <person name="Tu K.C."/>
            <person name="Irgon J."/>
            <person name="Wilson R.K."/>
        </authorList>
    </citation>
    <scope>NUCLEOTIDE SEQUENCE [LARGE SCALE GENOMIC DNA]</scope>
    <source>
        <strain>ATCC BAA-1116 / BB120</strain>
    </source>
</reference>
<comment type="function">
    <text evidence="1">One of the primary rRNA binding proteins, it binds directly to 16S rRNA where it nucleates assembly of the head domain of the 30S subunit. Is located at the subunit interface close to the decoding center, probably blocks exit of the E-site tRNA.</text>
</comment>
<comment type="subunit">
    <text evidence="1">Part of the 30S ribosomal subunit. Contacts proteins S9 and S11.</text>
</comment>
<comment type="similarity">
    <text evidence="1">Belongs to the universal ribosomal protein uS7 family.</text>
</comment>
<accession>A7MZ63</accession>
<organism>
    <name type="scientific">Vibrio campbellii (strain ATCC BAA-1116)</name>
    <dbReference type="NCBI Taxonomy" id="2902295"/>
    <lineage>
        <taxon>Bacteria</taxon>
        <taxon>Pseudomonadati</taxon>
        <taxon>Pseudomonadota</taxon>
        <taxon>Gammaproteobacteria</taxon>
        <taxon>Vibrionales</taxon>
        <taxon>Vibrionaceae</taxon>
        <taxon>Vibrio</taxon>
    </lineage>
</organism>
<sequence length="156" mass="17746">MPRRRVIGQRKILPDPKFKSELLAKFVNILMVDGKKSTAEKIVYTALDSMAEKSGKDHLAIFEEALENVRPAVEVKSRRVGGSTYQVPVEVRPVRRNALAMRWLVEAARKRGEKSMAQRLAAEMLDASENKGTAVKKREDVHRMADANKAFAHYRW</sequence>
<keyword id="KW-0687">Ribonucleoprotein</keyword>
<keyword id="KW-0689">Ribosomal protein</keyword>
<keyword id="KW-0694">RNA-binding</keyword>
<keyword id="KW-0699">rRNA-binding</keyword>
<keyword id="KW-0820">tRNA-binding</keyword>
<evidence type="ECO:0000255" key="1">
    <source>
        <dbReference type="HAMAP-Rule" id="MF_00480"/>
    </source>
</evidence>
<evidence type="ECO:0000305" key="2"/>
<gene>
    <name evidence="1" type="primary">rpsG</name>
    <name type="ordered locus">VIBHAR_00056</name>
</gene>
<protein>
    <recommendedName>
        <fullName evidence="1">Small ribosomal subunit protein uS7</fullName>
    </recommendedName>
    <alternativeName>
        <fullName evidence="2">30S ribosomal protein S7</fullName>
    </alternativeName>
</protein>